<name>CITG_SHIF8</name>
<accession>Q0T703</accession>
<protein>
    <recommendedName>
        <fullName evidence="1">Probable 2-(5''-triphosphoribosyl)-3'-dephosphocoenzyme-A synthase</fullName>
        <shortName evidence="1">2-(5''-triphosphoribosyl)-3'-dephospho-CoA synthase</shortName>
        <ecNumber evidence="1">2.4.2.52</ecNumber>
    </recommendedName>
</protein>
<organism>
    <name type="scientific">Shigella flexneri serotype 5b (strain 8401)</name>
    <dbReference type="NCBI Taxonomy" id="373384"/>
    <lineage>
        <taxon>Bacteria</taxon>
        <taxon>Pseudomonadati</taxon>
        <taxon>Pseudomonadota</taxon>
        <taxon>Gammaproteobacteria</taxon>
        <taxon>Enterobacterales</taxon>
        <taxon>Enterobacteriaceae</taxon>
        <taxon>Shigella</taxon>
    </lineage>
</organism>
<dbReference type="EC" id="2.4.2.52" evidence="1"/>
<dbReference type="EMBL" id="CP000266">
    <property type="protein sequence ID" value="ABF02823.1"/>
    <property type="molecule type" value="Genomic_DNA"/>
</dbReference>
<dbReference type="RefSeq" id="WP_000062462.1">
    <property type="nucleotide sequence ID" value="NC_008258.1"/>
</dbReference>
<dbReference type="KEGG" id="sfv:SFV_0566"/>
<dbReference type="HOGENOM" id="CLU_056179_1_0_6"/>
<dbReference type="Proteomes" id="UP000000659">
    <property type="component" value="Chromosome"/>
</dbReference>
<dbReference type="GO" id="GO:0005524">
    <property type="term" value="F:ATP binding"/>
    <property type="evidence" value="ECO:0007669"/>
    <property type="project" value="UniProtKB-KW"/>
</dbReference>
<dbReference type="GO" id="GO:0046917">
    <property type="term" value="F:triphosphoribosyl-dephospho-CoA synthase activity"/>
    <property type="evidence" value="ECO:0007669"/>
    <property type="project" value="UniProtKB-UniRule"/>
</dbReference>
<dbReference type="GO" id="GO:0051191">
    <property type="term" value="P:prosthetic group biosynthetic process"/>
    <property type="evidence" value="ECO:0007669"/>
    <property type="project" value="TreeGrafter"/>
</dbReference>
<dbReference type="FunFam" id="1.10.4200.10:FF:000001">
    <property type="entry name" value="Triphosphoribosyl-dephospho-CoA synthase CitG"/>
    <property type="match status" value="1"/>
</dbReference>
<dbReference type="Gene3D" id="1.10.4200.10">
    <property type="entry name" value="Triphosphoribosyl-dephospho-CoA protein"/>
    <property type="match status" value="1"/>
</dbReference>
<dbReference type="HAMAP" id="MF_00397">
    <property type="entry name" value="CitG"/>
    <property type="match status" value="1"/>
</dbReference>
<dbReference type="InterPro" id="IPR002736">
    <property type="entry name" value="CitG"/>
</dbReference>
<dbReference type="InterPro" id="IPR017551">
    <property type="entry name" value="TriPribosyl-deP-CoA_syn_CitG"/>
</dbReference>
<dbReference type="NCBIfam" id="TIGR03125">
    <property type="entry name" value="citrate_citG"/>
    <property type="match status" value="1"/>
</dbReference>
<dbReference type="NCBIfam" id="NF007503">
    <property type="entry name" value="PRK10096.1"/>
    <property type="match status" value="1"/>
</dbReference>
<dbReference type="PANTHER" id="PTHR30201:SF2">
    <property type="entry name" value="2-(5''-TRIPHOSPHORIBOSYL)-3'-DEPHOSPHOCOENZYME-A SYNTHASE"/>
    <property type="match status" value="1"/>
</dbReference>
<dbReference type="PANTHER" id="PTHR30201">
    <property type="entry name" value="TRIPHOSPHORIBOSYL-DEPHOSPHO-COA SYNTHASE"/>
    <property type="match status" value="1"/>
</dbReference>
<dbReference type="Pfam" id="PF01874">
    <property type="entry name" value="CitG"/>
    <property type="match status" value="1"/>
</dbReference>
<evidence type="ECO:0000255" key="1">
    <source>
        <dbReference type="HAMAP-Rule" id="MF_00397"/>
    </source>
</evidence>
<reference key="1">
    <citation type="journal article" date="2006" name="BMC Genomics">
        <title>Complete genome sequence of Shigella flexneri 5b and comparison with Shigella flexneri 2a.</title>
        <authorList>
            <person name="Nie H."/>
            <person name="Yang F."/>
            <person name="Zhang X."/>
            <person name="Yang J."/>
            <person name="Chen L."/>
            <person name="Wang J."/>
            <person name="Xiong Z."/>
            <person name="Peng J."/>
            <person name="Sun L."/>
            <person name="Dong J."/>
            <person name="Xue Y."/>
            <person name="Xu X."/>
            <person name="Chen S."/>
            <person name="Yao Z."/>
            <person name="Shen Y."/>
            <person name="Jin Q."/>
        </authorList>
    </citation>
    <scope>NUCLEOTIDE SEQUENCE [LARGE SCALE GENOMIC DNA]</scope>
    <source>
        <strain>8401</strain>
    </source>
</reference>
<gene>
    <name evidence="1" type="primary">citG</name>
    <name type="ordered locus">SFV_0566</name>
</gene>
<feature type="chain" id="PRO_1000049598" description="Probable 2-(5''-triphosphoribosyl)-3'-dephosphocoenzyme-A synthase">
    <location>
        <begin position="1"/>
        <end position="292"/>
    </location>
</feature>
<sequence length="292" mass="31690">MSMPATSTKTTKLATSLIDEYALLGWRAMLTEVNLSPKPGLVDRINCGAHKDMALEDFHRSALAIQGWLPRFIEFGACSAEMAPEAVLHGLRPIGMACEGDMFRATAGVNTHKGSIFSLGLLCAAIGRLLQLNQPVTPTTVCSTAASFCRGLTDRELRTNNSRLTAGQRLYQQLGLTGARGEAEAGYPLVINHALPHYLTLLDQGLDPELALLDTLLLLMATNGDTNVASRGGEGGLRWLQREAQTLLQKGGIRTPTDLDYLRQFDRECIERNLSPGGSADLLILTWFLAQI</sequence>
<keyword id="KW-0067">ATP-binding</keyword>
<keyword id="KW-0547">Nucleotide-binding</keyword>
<keyword id="KW-0808">Transferase</keyword>
<proteinExistence type="inferred from homology"/>
<comment type="catalytic activity">
    <reaction evidence="1">
        <text>3'-dephospho-CoA + ATP = 2'-(5''-triphospho-alpha-D-ribosyl)-3'-dephospho-CoA + adenine</text>
        <dbReference type="Rhea" id="RHEA:15117"/>
        <dbReference type="ChEBI" id="CHEBI:16708"/>
        <dbReference type="ChEBI" id="CHEBI:30616"/>
        <dbReference type="ChEBI" id="CHEBI:57328"/>
        <dbReference type="ChEBI" id="CHEBI:61378"/>
        <dbReference type="EC" id="2.4.2.52"/>
    </reaction>
</comment>
<comment type="similarity">
    <text evidence="1">Belongs to the CitG/MdcB family.</text>
</comment>